<keyword id="KW-0108">Calcium channel impairing toxin</keyword>
<keyword id="KW-1015">Disulfide bond</keyword>
<keyword id="KW-0872">Ion channel impairing toxin</keyword>
<keyword id="KW-0960">Knottin</keyword>
<keyword id="KW-0528">Neurotoxin</keyword>
<keyword id="KW-0638">Presynaptic neurotoxin</keyword>
<keyword id="KW-0964">Secreted</keyword>
<keyword id="KW-0732">Signal</keyword>
<keyword id="KW-0800">Toxin</keyword>
<keyword id="KW-1218">Voltage-gated calcium channel impairing toxin</keyword>
<sequence>MCVATCLCTFAYVLAKSDEGENLISKVEETQRGCIEIGGDCDGYLDKSYCQCCRNNGFCSCYKVPEWFGYKVGCKCSVDWNFVGWCRLKQFCPGGSQNPSLCKDPNPRRRRHGK</sequence>
<dbReference type="EMBL" id="AY681343">
    <property type="protein sequence ID" value="AAU93684.1"/>
    <property type="molecule type" value="mRNA"/>
</dbReference>
<dbReference type="ArachnoServer" id="AS000070">
    <property type="toxin name" value="U10-agatoxin-Ao1a"/>
</dbReference>
<dbReference type="GO" id="GO:0005576">
    <property type="term" value="C:extracellular region"/>
    <property type="evidence" value="ECO:0007669"/>
    <property type="project" value="UniProtKB-SubCell"/>
</dbReference>
<dbReference type="GO" id="GO:0044231">
    <property type="term" value="C:host cell presynaptic membrane"/>
    <property type="evidence" value="ECO:0007669"/>
    <property type="project" value="UniProtKB-KW"/>
</dbReference>
<dbReference type="GO" id="GO:0005246">
    <property type="term" value="F:calcium channel regulator activity"/>
    <property type="evidence" value="ECO:0007669"/>
    <property type="project" value="UniProtKB-KW"/>
</dbReference>
<dbReference type="GO" id="GO:0090729">
    <property type="term" value="F:toxin activity"/>
    <property type="evidence" value="ECO:0007669"/>
    <property type="project" value="UniProtKB-KW"/>
</dbReference>
<dbReference type="InterPro" id="IPR005853">
    <property type="entry name" value="Omega-agatoxin_II/III_CS"/>
</dbReference>
<dbReference type="InterPro" id="IPR013605">
    <property type="entry name" value="Toxin_34"/>
</dbReference>
<dbReference type="Pfam" id="PF08396">
    <property type="entry name" value="Toxin_34"/>
    <property type="match status" value="1"/>
</dbReference>
<dbReference type="PROSITE" id="PS60023">
    <property type="entry name" value="OMEGA_AGA_II_III"/>
    <property type="match status" value="1"/>
</dbReference>
<comment type="function">
    <text evidence="1">Inhibits voltage-gated calcium channels (Cav).</text>
</comment>
<comment type="subcellular location">
    <subcellularLocation>
        <location evidence="1">Secreted</location>
    </subcellularLocation>
</comment>
<comment type="tissue specificity">
    <text>Expressed by the venom gland.</text>
</comment>
<comment type="domain">
    <text evidence="4">The presence of a 'disulfide through disulfide knot' structurally defines this protein as a knottin.</text>
</comment>
<comment type="similarity">
    <text evidence="4">Belongs to the neurotoxin 04 (omega-agtx) family. 03 (type II/III omega-agtx) subfamily.</text>
</comment>
<name>TXAG1_AGEOR</name>
<proteinExistence type="evidence at transcript level"/>
<protein>
    <recommendedName>
        <fullName>U10-agatoxin-Ao1a</fullName>
        <shortName>U10-AGTX-Ao1a</shortName>
    </recommendedName>
    <alternativeName>
        <fullName>AgorTX_B7b</fullName>
    </alternativeName>
</protein>
<feature type="signal peptide" evidence="2">
    <location>
        <begin position="1"/>
        <end position="15"/>
    </location>
</feature>
<feature type="propeptide" id="PRO_5000093687" evidence="2">
    <location>
        <begin position="16"/>
        <end position="32"/>
    </location>
</feature>
<feature type="chain" id="PRO_5000093688" description="U10-agatoxin-Ao1a">
    <location>
        <begin position="33"/>
        <end position="112"/>
    </location>
</feature>
<feature type="region of interest" description="Disordered" evidence="3">
    <location>
        <begin position="95"/>
        <end position="114"/>
    </location>
</feature>
<feature type="disulfide bond" evidence="4">
    <location>
        <begin position="34"/>
        <end position="53"/>
    </location>
</feature>
<feature type="disulfide bond" evidence="4">
    <location>
        <begin position="41"/>
        <end position="59"/>
    </location>
</feature>
<feature type="disulfide bond" evidence="4">
    <location>
        <begin position="50"/>
        <end position="86"/>
    </location>
</feature>
<feature type="disulfide bond" evidence="4">
    <location>
        <begin position="52"/>
        <end position="76"/>
    </location>
</feature>
<feature type="disulfide bond" evidence="4">
    <location>
        <begin position="61"/>
        <end position="74"/>
    </location>
</feature>
<evidence type="ECO:0000250" key="1"/>
<evidence type="ECO:0000255" key="2"/>
<evidence type="ECO:0000256" key="3">
    <source>
        <dbReference type="SAM" id="MobiDB-lite"/>
    </source>
</evidence>
<evidence type="ECO:0000305" key="4"/>
<organism>
    <name type="scientific">Agelena orientalis</name>
    <name type="common">Funnel-web spider</name>
    <dbReference type="NCBI Taxonomy" id="293813"/>
    <lineage>
        <taxon>Eukaryota</taxon>
        <taxon>Metazoa</taxon>
        <taxon>Ecdysozoa</taxon>
        <taxon>Arthropoda</taxon>
        <taxon>Chelicerata</taxon>
        <taxon>Arachnida</taxon>
        <taxon>Araneae</taxon>
        <taxon>Araneomorphae</taxon>
        <taxon>Entelegynae</taxon>
        <taxon>Agelenidae</taxon>
        <taxon>Agelena</taxon>
    </lineage>
</organism>
<accession>Q5Y4U2</accession>
<reference key="1">
    <citation type="journal article" date="2005" name="Proteins">
        <title>A novel strategy for the identification of toxinlike structures in spider venom.</title>
        <authorList>
            <person name="Kozlov S.A."/>
            <person name="Malyavka A."/>
            <person name="McCutchen B."/>
            <person name="Lu A."/>
            <person name="Schepers E."/>
            <person name="Herrmann R."/>
            <person name="Grishin E.V."/>
        </authorList>
    </citation>
    <scope>NUCLEOTIDE SEQUENCE [MRNA]</scope>
    <source>
        <tissue>Venom gland</tissue>
    </source>
</reference>